<comment type="function">
    <text evidence="1">Key component of the proton channel; it plays a direct role in the translocation of protons across the membrane.</text>
</comment>
<comment type="subunit">
    <text evidence="1">F-type ATPases have 2 components, CF(1) - the catalytic core - and CF(0) - the membrane proton channel. CF(1) has five subunits: alpha(3), beta(3), gamma(1), delta(1), epsilon(1). CF(0) has three main subunits: a(1), b(2) and c(9-12). The alpha and beta chains form an alternating ring which encloses part of the gamma chain. CF(1) is attached to CF(0) by a central stalk formed by the gamma and epsilon chains, while a peripheral stalk is formed by the delta and b chains.</text>
</comment>
<comment type="subcellular location">
    <subcellularLocation>
        <location evidence="1">Cell inner membrane</location>
        <topology evidence="1">Multi-pass membrane protein</topology>
    </subcellularLocation>
</comment>
<comment type="similarity">
    <text evidence="1">Belongs to the ATPase A chain family.</text>
</comment>
<evidence type="ECO:0000255" key="1">
    <source>
        <dbReference type="HAMAP-Rule" id="MF_01393"/>
    </source>
</evidence>
<sequence>MFNDHLAGAGNALTGIVGMAPEARPWANFVTMQLLVVAIIVVLFAILRPRLSPDRPGKLQHTFELVYGFLHEQAEEQIGHEGHHYLAFFGTIFIFILFANLIGVVPGFEAPTMVPSVPAGCAIAAFFYYNIVGVQANGLGRYLAHFAGPMPLLAPLMIPIELVSHMARPLSLTIRLFANMYAGEQVTMVFLKLTFLFVPAVFMGLHVFVSFLQAYIFMLLTMMYVAGAVAHEH</sequence>
<feature type="chain" id="PRO_0000362471" description="ATP synthase subunit a">
    <location>
        <begin position="1"/>
        <end position="233"/>
    </location>
</feature>
<feature type="transmembrane region" description="Helical" evidence="1">
    <location>
        <begin position="27"/>
        <end position="47"/>
    </location>
</feature>
<feature type="transmembrane region" description="Helical" evidence="1">
    <location>
        <begin position="85"/>
        <end position="105"/>
    </location>
</feature>
<feature type="transmembrane region" description="Helical" evidence="1">
    <location>
        <begin position="114"/>
        <end position="134"/>
    </location>
</feature>
<feature type="transmembrane region" description="Helical" evidence="1">
    <location>
        <begin position="143"/>
        <end position="163"/>
    </location>
</feature>
<feature type="transmembrane region" description="Helical" evidence="1">
    <location>
        <begin position="189"/>
        <end position="209"/>
    </location>
</feature>
<feature type="transmembrane region" description="Helical" evidence="1">
    <location>
        <begin position="210"/>
        <end position="230"/>
    </location>
</feature>
<protein>
    <recommendedName>
        <fullName evidence="1">ATP synthase subunit a</fullName>
    </recommendedName>
    <alternativeName>
        <fullName evidence="1">ATP synthase F0 sector subunit a</fullName>
    </alternativeName>
    <alternativeName>
        <fullName evidence="1">F-ATPase subunit 6</fullName>
    </alternativeName>
</protein>
<gene>
    <name evidence="1" type="primary">atpB</name>
    <name type="ordered locus">Acid_0766</name>
</gene>
<proteinExistence type="inferred from homology"/>
<organism>
    <name type="scientific">Solibacter usitatus (strain Ellin6076)</name>
    <dbReference type="NCBI Taxonomy" id="234267"/>
    <lineage>
        <taxon>Bacteria</taxon>
        <taxon>Pseudomonadati</taxon>
        <taxon>Acidobacteriota</taxon>
        <taxon>Terriglobia</taxon>
        <taxon>Bryobacterales</taxon>
        <taxon>Solibacteraceae</taxon>
        <taxon>Candidatus Solibacter</taxon>
    </lineage>
</organism>
<keyword id="KW-0066">ATP synthesis</keyword>
<keyword id="KW-0997">Cell inner membrane</keyword>
<keyword id="KW-1003">Cell membrane</keyword>
<keyword id="KW-0138">CF(0)</keyword>
<keyword id="KW-0375">Hydrogen ion transport</keyword>
<keyword id="KW-0406">Ion transport</keyword>
<keyword id="KW-0472">Membrane</keyword>
<keyword id="KW-0812">Transmembrane</keyword>
<keyword id="KW-1133">Transmembrane helix</keyword>
<keyword id="KW-0813">Transport</keyword>
<dbReference type="EMBL" id="CP000473">
    <property type="protein sequence ID" value="ABJ81765.1"/>
    <property type="molecule type" value="Genomic_DNA"/>
</dbReference>
<dbReference type="SMR" id="Q02B01"/>
<dbReference type="FunCoup" id="Q02B01">
    <property type="interactions" value="419"/>
</dbReference>
<dbReference type="STRING" id="234267.Acid_0766"/>
<dbReference type="KEGG" id="sus:Acid_0766"/>
<dbReference type="eggNOG" id="COG0356">
    <property type="taxonomic scope" value="Bacteria"/>
</dbReference>
<dbReference type="HOGENOM" id="CLU_041018_2_2_0"/>
<dbReference type="InParanoid" id="Q02B01"/>
<dbReference type="OrthoDB" id="9789241at2"/>
<dbReference type="GO" id="GO:0005886">
    <property type="term" value="C:plasma membrane"/>
    <property type="evidence" value="ECO:0007669"/>
    <property type="project" value="UniProtKB-SubCell"/>
</dbReference>
<dbReference type="GO" id="GO:0045259">
    <property type="term" value="C:proton-transporting ATP synthase complex"/>
    <property type="evidence" value="ECO:0007669"/>
    <property type="project" value="UniProtKB-KW"/>
</dbReference>
<dbReference type="GO" id="GO:0046933">
    <property type="term" value="F:proton-transporting ATP synthase activity, rotational mechanism"/>
    <property type="evidence" value="ECO:0007669"/>
    <property type="project" value="UniProtKB-UniRule"/>
</dbReference>
<dbReference type="GO" id="GO:0042777">
    <property type="term" value="P:proton motive force-driven plasma membrane ATP synthesis"/>
    <property type="evidence" value="ECO:0007669"/>
    <property type="project" value="TreeGrafter"/>
</dbReference>
<dbReference type="CDD" id="cd00310">
    <property type="entry name" value="ATP-synt_Fo_a_6"/>
    <property type="match status" value="1"/>
</dbReference>
<dbReference type="Gene3D" id="1.20.120.220">
    <property type="entry name" value="ATP synthase, F0 complex, subunit A"/>
    <property type="match status" value="1"/>
</dbReference>
<dbReference type="HAMAP" id="MF_01393">
    <property type="entry name" value="ATP_synth_a_bact"/>
    <property type="match status" value="1"/>
</dbReference>
<dbReference type="InterPro" id="IPR045082">
    <property type="entry name" value="ATP_syn_F0_a_bact/chloroplast"/>
</dbReference>
<dbReference type="InterPro" id="IPR000568">
    <property type="entry name" value="ATP_synth_F0_asu"/>
</dbReference>
<dbReference type="InterPro" id="IPR023011">
    <property type="entry name" value="ATP_synth_F0_asu_AS"/>
</dbReference>
<dbReference type="InterPro" id="IPR035908">
    <property type="entry name" value="F0_ATP_A_sf"/>
</dbReference>
<dbReference type="NCBIfam" id="TIGR01131">
    <property type="entry name" value="ATP_synt_6_or_A"/>
    <property type="match status" value="1"/>
</dbReference>
<dbReference type="PANTHER" id="PTHR42823">
    <property type="entry name" value="ATP SYNTHASE SUBUNIT A, CHLOROPLASTIC"/>
    <property type="match status" value="1"/>
</dbReference>
<dbReference type="PANTHER" id="PTHR42823:SF3">
    <property type="entry name" value="ATP SYNTHASE SUBUNIT A, CHLOROPLASTIC"/>
    <property type="match status" value="1"/>
</dbReference>
<dbReference type="Pfam" id="PF00119">
    <property type="entry name" value="ATP-synt_A"/>
    <property type="match status" value="1"/>
</dbReference>
<dbReference type="PRINTS" id="PR00123">
    <property type="entry name" value="ATPASEA"/>
</dbReference>
<dbReference type="SUPFAM" id="SSF81336">
    <property type="entry name" value="F1F0 ATP synthase subunit A"/>
    <property type="match status" value="1"/>
</dbReference>
<dbReference type="PROSITE" id="PS00449">
    <property type="entry name" value="ATPASE_A"/>
    <property type="match status" value="1"/>
</dbReference>
<name>ATP6_SOLUE</name>
<accession>Q02B01</accession>
<reference key="1">
    <citation type="journal article" date="2009" name="Appl. Environ. Microbiol.">
        <title>Three genomes from the phylum Acidobacteria provide insight into the lifestyles of these microorganisms in soils.</title>
        <authorList>
            <person name="Ward N.L."/>
            <person name="Challacombe J.F."/>
            <person name="Janssen P.H."/>
            <person name="Henrissat B."/>
            <person name="Coutinho P.M."/>
            <person name="Wu M."/>
            <person name="Xie G."/>
            <person name="Haft D.H."/>
            <person name="Sait M."/>
            <person name="Badger J."/>
            <person name="Barabote R.D."/>
            <person name="Bradley B."/>
            <person name="Brettin T.S."/>
            <person name="Brinkac L.M."/>
            <person name="Bruce D."/>
            <person name="Creasy T."/>
            <person name="Daugherty S.C."/>
            <person name="Davidsen T.M."/>
            <person name="DeBoy R.T."/>
            <person name="Detter J.C."/>
            <person name="Dodson R.J."/>
            <person name="Durkin A.S."/>
            <person name="Ganapathy A."/>
            <person name="Gwinn-Giglio M."/>
            <person name="Han C.S."/>
            <person name="Khouri H."/>
            <person name="Kiss H."/>
            <person name="Kothari S.P."/>
            <person name="Madupu R."/>
            <person name="Nelson K.E."/>
            <person name="Nelson W.C."/>
            <person name="Paulsen I."/>
            <person name="Penn K."/>
            <person name="Ren Q."/>
            <person name="Rosovitz M.J."/>
            <person name="Selengut J.D."/>
            <person name="Shrivastava S."/>
            <person name="Sullivan S.A."/>
            <person name="Tapia R."/>
            <person name="Thompson L.S."/>
            <person name="Watkins K.L."/>
            <person name="Yang Q."/>
            <person name="Yu C."/>
            <person name="Zafar N."/>
            <person name="Zhou L."/>
            <person name="Kuske C.R."/>
        </authorList>
    </citation>
    <scope>NUCLEOTIDE SEQUENCE [LARGE SCALE GENOMIC DNA]</scope>
    <source>
        <strain>Ellin6076</strain>
    </source>
</reference>